<accession>B1VRG0</accession>
<reference key="1">
    <citation type="journal article" date="2008" name="J. Bacteriol.">
        <title>Genome sequence of the streptomycin-producing microorganism Streptomyces griseus IFO 13350.</title>
        <authorList>
            <person name="Ohnishi Y."/>
            <person name="Ishikawa J."/>
            <person name="Hara H."/>
            <person name="Suzuki H."/>
            <person name="Ikenoya M."/>
            <person name="Ikeda H."/>
            <person name="Yamashita A."/>
            <person name="Hattori M."/>
            <person name="Horinouchi S."/>
        </authorList>
    </citation>
    <scope>NUCLEOTIDE SEQUENCE [LARGE SCALE GENOMIC DNA]</scope>
    <source>
        <strain>JCM 4626 / CBS 651.72 / NBRC 13350 / KCC S-0626 / ISP 5235</strain>
    </source>
</reference>
<feature type="chain" id="PRO_0000345551" description="Small ribosomal subunit protein bS18A">
    <location>
        <begin position="1"/>
        <end position="82"/>
    </location>
</feature>
<evidence type="ECO:0000255" key="1">
    <source>
        <dbReference type="HAMAP-Rule" id="MF_00270"/>
    </source>
</evidence>
<evidence type="ECO:0000305" key="2"/>
<protein>
    <recommendedName>
        <fullName evidence="1">Small ribosomal subunit protein bS18A</fullName>
    </recommendedName>
    <alternativeName>
        <fullName evidence="2">30S ribosomal protein S18 1</fullName>
    </alternativeName>
</protein>
<name>RS181_STRGG</name>
<dbReference type="EMBL" id="AP009493">
    <property type="protein sequence ID" value="BAG17378.1"/>
    <property type="molecule type" value="Genomic_DNA"/>
</dbReference>
<dbReference type="SMR" id="B1VRG0"/>
<dbReference type="KEGG" id="sgr:SGR_549"/>
<dbReference type="eggNOG" id="COG0238">
    <property type="taxonomic scope" value="Bacteria"/>
</dbReference>
<dbReference type="HOGENOM" id="CLU_148710_1_0_11"/>
<dbReference type="Proteomes" id="UP000001685">
    <property type="component" value="Chromosome"/>
</dbReference>
<dbReference type="GO" id="GO:0022627">
    <property type="term" value="C:cytosolic small ribosomal subunit"/>
    <property type="evidence" value="ECO:0007669"/>
    <property type="project" value="TreeGrafter"/>
</dbReference>
<dbReference type="GO" id="GO:0070181">
    <property type="term" value="F:small ribosomal subunit rRNA binding"/>
    <property type="evidence" value="ECO:0007669"/>
    <property type="project" value="TreeGrafter"/>
</dbReference>
<dbReference type="GO" id="GO:0003735">
    <property type="term" value="F:structural constituent of ribosome"/>
    <property type="evidence" value="ECO:0007669"/>
    <property type="project" value="InterPro"/>
</dbReference>
<dbReference type="GO" id="GO:0006412">
    <property type="term" value="P:translation"/>
    <property type="evidence" value="ECO:0007669"/>
    <property type="project" value="UniProtKB-UniRule"/>
</dbReference>
<dbReference type="FunFam" id="4.10.640.10:FF:000016">
    <property type="entry name" value="30S ribosomal protein S18"/>
    <property type="match status" value="1"/>
</dbReference>
<dbReference type="Gene3D" id="4.10.640.10">
    <property type="entry name" value="Ribosomal protein S18"/>
    <property type="match status" value="1"/>
</dbReference>
<dbReference type="HAMAP" id="MF_00270">
    <property type="entry name" value="Ribosomal_bS18"/>
    <property type="match status" value="1"/>
</dbReference>
<dbReference type="InterPro" id="IPR001648">
    <property type="entry name" value="Ribosomal_bS18"/>
</dbReference>
<dbReference type="InterPro" id="IPR018275">
    <property type="entry name" value="Ribosomal_bS18_CS"/>
</dbReference>
<dbReference type="InterPro" id="IPR036870">
    <property type="entry name" value="Ribosomal_bS18_sf"/>
</dbReference>
<dbReference type="NCBIfam" id="TIGR00165">
    <property type="entry name" value="S18"/>
    <property type="match status" value="1"/>
</dbReference>
<dbReference type="PANTHER" id="PTHR13479">
    <property type="entry name" value="30S RIBOSOMAL PROTEIN S18"/>
    <property type="match status" value="1"/>
</dbReference>
<dbReference type="PANTHER" id="PTHR13479:SF40">
    <property type="entry name" value="SMALL RIBOSOMAL SUBUNIT PROTEIN BS18M"/>
    <property type="match status" value="1"/>
</dbReference>
<dbReference type="Pfam" id="PF01084">
    <property type="entry name" value="Ribosomal_S18"/>
    <property type="match status" value="1"/>
</dbReference>
<dbReference type="PRINTS" id="PR00974">
    <property type="entry name" value="RIBOSOMALS18"/>
</dbReference>
<dbReference type="SUPFAM" id="SSF46911">
    <property type="entry name" value="Ribosomal protein S18"/>
    <property type="match status" value="1"/>
</dbReference>
<dbReference type="PROSITE" id="PS00057">
    <property type="entry name" value="RIBOSOMAL_S18"/>
    <property type="match status" value="1"/>
</dbReference>
<comment type="function">
    <text evidence="1">Binds as a heterodimer with protein bS6 to the central domain of the 16S rRNA, where it helps stabilize the platform of the 30S subunit.</text>
</comment>
<comment type="subunit">
    <text evidence="1">Part of the 30S ribosomal subunit. Forms a tight heterodimer with protein bS6.</text>
</comment>
<comment type="similarity">
    <text evidence="1">Belongs to the bacterial ribosomal protein bS18 family.</text>
</comment>
<keyword id="KW-0687">Ribonucleoprotein</keyword>
<keyword id="KW-0689">Ribosomal protein</keyword>
<keyword id="KW-0694">RNA-binding</keyword>
<keyword id="KW-0699">rRNA-binding</keyword>
<organism>
    <name type="scientific">Streptomyces griseus subsp. griseus (strain JCM 4626 / CBS 651.72 / NBRC 13350 / KCC S-0626 / ISP 5235)</name>
    <dbReference type="NCBI Taxonomy" id="455632"/>
    <lineage>
        <taxon>Bacteria</taxon>
        <taxon>Bacillati</taxon>
        <taxon>Actinomycetota</taxon>
        <taxon>Actinomycetes</taxon>
        <taxon>Kitasatosporales</taxon>
        <taxon>Streptomycetaceae</taxon>
        <taxon>Streptomyces</taxon>
    </lineage>
</organism>
<gene>
    <name evidence="1" type="primary">rpsR1</name>
    <name type="ordered locus">SGR_549</name>
</gene>
<sequence length="82" mass="9372">MARQQEPRKPFKSRPNPLDAAEITYIDYKDTDLLRRFVSDRGKIRGRRVTRISARQQRQVAAAIKNAREMALLPYTGSPAGT</sequence>
<proteinExistence type="inferred from homology"/>